<comment type="function">
    <text evidence="8 9 10 11 12 13 14">Critical regulator of endosomal recycling of numerous surface proteins, including integrins, signaling receptor and channels (PubMed:15121882, PubMed:15769472, PubMed:39587083). Binds to NPxY sequences in the cytoplasmic tails of target cargos (PubMed:21512128). Associates with retriever and CCC complexes to prevent lysosomal degradation and promote cell surface recycling of numerous cargos such as integrins ITGB1, ITGB5 and their associated alpha subunits (PubMed:22492727, PubMed:28892079, PubMed:39587083). Also required for maintenance of normal cell surface levels of APP and LRP1 (PubMed:16712798, PubMed:19005208). Interacts with membranes containing phosphatidylinositol 3-phosphate (PtdIns(3P)) (PubMed:16712798).</text>
</comment>
<comment type="subunit">
    <text evidence="2 6 7 9 10 11 12 13 14 16">Monomer (PubMed:21512128). Interacts with APP (via cytoplasmic YXNPXY motif) (By similarity). Interacts with KIF1B (By similarity). Interacts with the C-termini of P-selectin, PTC, LDLR, VLDLR, LRP1 and LRP8 (PubMed:11237770, PubMed:14739284, PubMed:15769472, PubMed:19005208). Interacts with KRIT1 (via N-terminus) (PubMed:16712798). Interacts with HRAS (PubMed:21512128). Interacts with ITGB1 and ITGB5 (via NPxY motif) (PubMed:22492727). Interacts with CCDC22 and CCDC93; the interaction associates SNX17 with the CCC complex (PubMed:28892079). Interacts (via C-terminus) with VPS26C and VPS35L; the interactions are direct and associate SNX17 with the retriever complex (PubMed:28892079, PubMed:39587083).</text>
</comment>
<comment type="interaction">
    <interactant intactId="EBI-1752620">
        <id>Q15036</id>
    </interactant>
    <interactant intactId="EBI-77613">
        <id>P05067</id>
        <label>APP</label>
    </interactant>
    <organismsDiffer>false</organismsDiffer>
    <experiments>3</experiments>
</comment>
<comment type="interaction">
    <interactant intactId="EBI-1752620">
        <id>Q15036</id>
    </interactant>
    <interactant intactId="EBI-1752118">
        <id>P31273</id>
        <label>HOXC8</label>
    </interactant>
    <organismsDiffer>false</organismsDiffer>
    <experiments>9</experiments>
</comment>
<comment type="interaction">
    <interactant intactId="EBI-1752620">
        <id>Q15036</id>
    </interactant>
    <interactant intactId="EBI-389883">
        <id>P16333</id>
        <label>NCK1</label>
    </interactant>
    <organismsDiffer>false</organismsDiffer>
    <experiments>3</experiments>
</comment>
<comment type="interaction">
    <interactant intactId="EBI-1752620">
        <id>Q15036</id>
    </interactant>
    <interactant intactId="EBI-79387">
        <id>P19174</id>
        <label>PLCG1</label>
    </interactant>
    <organismsDiffer>false</organismsDiffer>
    <experiments>2</experiments>
</comment>
<comment type="interaction">
    <interactant intactId="EBI-1752620">
        <id>Q15036</id>
    </interactant>
    <interactant intactId="EBI-712367">
        <id>Q9UI14</id>
        <label>RABAC1</label>
    </interactant>
    <organismsDiffer>false</organismsDiffer>
    <experiments>3</experiments>
</comment>
<comment type="interaction">
    <interactant intactId="EBI-1752620">
        <id>Q15036</id>
    </interactant>
    <interactant intactId="EBI-366017">
        <id>Q13671</id>
        <label>RIN1</label>
    </interactant>
    <organismsDiffer>false</organismsDiffer>
    <experiments>3</experiments>
</comment>
<comment type="interaction">
    <interactant intactId="EBI-1752620">
        <id>Q15036</id>
    </interactant>
    <interactant intactId="EBI-2341619">
        <id>Q8TEB7</id>
        <label>RNF128</label>
    </interactant>
    <organismsDiffer>false</organismsDiffer>
    <experiments>3</experiments>
</comment>
<comment type="subcellular location">
    <subcellularLocation>
        <location evidence="6 12">Cytoplasm</location>
    </subcellularLocation>
    <subcellularLocation>
        <location evidence="7 8 9 12 14">Early endosome</location>
    </subcellularLocation>
    <subcellularLocation>
        <location evidence="6 10">Cytoplasmic vesicle membrane</location>
        <topology evidence="6">Peripheral membrane protein</topology>
        <orientation evidence="6">Cytoplasmic side</orientation>
    </subcellularLocation>
</comment>
<comment type="alternative products">
    <event type="alternative splicing"/>
    <isoform>
        <id>Q15036-1</id>
        <name>1</name>
        <sequence type="displayed"/>
    </isoform>
    <isoform>
        <id>Q15036-2</id>
        <name>2</name>
        <sequence type="described" ref="VSP_044935"/>
    </isoform>
</comment>
<comment type="domain">
    <text evidence="12">The PX domain mediates specific binding to phosphatidylinositol 3-phosphate (PtdIns(P3)). Required for association with endosomes.</text>
</comment>
<comment type="domain">
    <text evidence="12 15">The PTB-like F3 module within the FERM-like domain mediates cargo recognition via their NPxY sequences, while the F1 module (Ras-associating) is responsible for interaction with membrane-bound HRAS.</text>
</comment>
<comment type="similarity">
    <text evidence="18">Belongs to the sorting nexin family.</text>
</comment>
<comment type="sequence caution" evidence="18">
    <conflict type="erroneous initiation">
        <sequence resource="EMBL-CDS" id="BAA06542"/>
    </conflict>
    <text>Extended N-terminus.</text>
</comment>
<reference key="1">
    <citation type="journal article" date="1994" name="DNA Res.">
        <title>Prediction of the coding sequences of unidentified human genes. II. The coding sequences of 40 new genes (KIAA0041-KIAA0080) deduced by analysis of cDNA clones from human cell line KG-1.</title>
        <authorList>
            <person name="Nomura N."/>
            <person name="Nagase T."/>
            <person name="Miyajima N."/>
            <person name="Sazuka T."/>
            <person name="Tanaka A."/>
            <person name="Sato S."/>
            <person name="Seki N."/>
            <person name="Kawarabayasi Y."/>
            <person name="Ishikawa K."/>
            <person name="Tabata S."/>
        </authorList>
    </citation>
    <scope>NUCLEOTIDE SEQUENCE [LARGE SCALE MRNA] (ISOFORM 1)</scope>
    <source>
        <tissue>Bone marrow</tissue>
    </source>
</reference>
<reference key="2">
    <citation type="submission" date="2000-07" db="EMBL/GenBank/DDBJ databases">
        <title>Genomic structure of the KIAA064 gene.</title>
        <authorList>
            <person name="Wightman P.J."/>
            <person name="Bonthron D.T."/>
        </authorList>
    </citation>
    <scope>NUCLEOTIDE SEQUENCE [GENOMIC DNA]</scope>
</reference>
<reference key="3">
    <citation type="submission" date="2003-05" db="EMBL/GenBank/DDBJ databases">
        <title>Cloning of human full-length CDSs in BD Creator(TM) system donor vector.</title>
        <authorList>
            <person name="Kalnine N."/>
            <person name="Chen X."/>
            <person name="Rolfs A."/>
            <person name="Halleck A."/>
            <person name="Hines L."/>
            <person name="Eisenstein S."/>
            <person name="Koundinya M."/>
            <person name="Raphael J."/>
            <person name="Moreira D."/>
            <person name="Kelley T."/>
            <person name="LaBaer J."/>
            <person name="Lin Y."/>
            <person name="Phelan M."/>
            <person name="Farmer A."/>
        </authorList>
    </citation>
    <scope>NUCLEOTIDE SEQUENCE [LARGE SCALE MRNA] (ISOFORM 1)</scope>
</reference>
<reference key="4">
    <citation type="journal article" date="2004" name="Nat. Genet.">
        <title>Complete sequencing and characterization of 21,243 full-length human cDNAs.</title>
        <authorList>
            <person name="Ota T."/>
            <person name="Suzuki Y."/>
            <person name="Nishikawa T."/>
            <person name="Otsuki T."/>
            <person name="Sugiyama T."/>
            <person name="Irie R."/>
            <person name="Wakamatsu A."/>
            <person name="Hayashi K."/>
            <person name="Sato H."/>
            <person name="Nagai K."/>
            <person name="Kimura K."/>
            <person name="Makita H."/>
            <person name="Sekine M."/>
            <person name="Obayashi M."/>
            <person name="Nishi T."/>
            <person name="Shibahara T."/>
            <person name="Tanaka T."/>
            <person name="Ishii S."/>
            <person name="Yamamoto J."/>
            <person name="Saito K."/>
            <person name="Kawai Y."/>
            <person name="Isono Y."/>
            <person name="Nakamura Y."/>
            <person name="Nagahari K."/>
            <person name="Murakami K."/>
            <person name="Yasuda T."/>
            <person name="Iwayanagi T."/>
            <person name="Wagatsuma M."/>
            <person name="Shiratori A."/>
            <person name="Sudo H."/>
            <person name="Hosoiri T."/>
            <person name="Kaku Y."/>
            <person name="Kodaira H."/>
            <person name="Kondo H."/>
            <person name="Sugawara M."/>
            <person name="Takahashi M."/>
            <person name="Kanda K."/>
            <person name="Yokoi T."/>
            <person name="Furuya T."/>
            <person name="Kikkawa E."/>
            <person name="Omura Y."/>
            <person name="Abe K."/>
            <person name="Kamihara K."/>
            <person name="Katsuta N."/>
            <person name="Sato K."/>
            <person name="Tanikawa M."/>
            <person name="Yamazaki M."/>
            <person name="Ninomiya K."/>
            <person name="Ishibashi T."/>
            <person name="Yamashita H."/>
            <person name="Murakawa K."/>
            <person name="Fujimori K."/>
            <person name="Tanai H."/>
            <person name="Kimata M."/>
            <person name="Watanabe M."/>
            <person name="Hiraoka S."/>
            <person name="Chiba Y."/>
            <person name="Ishida S."/>
            <person name="Ono Y."/>
            <person name="Takiguchi S."/>
            <person name="Watanabe S."/>
            <person name="Yosida M."/>
            <person name="Hotuta T."/>
            <person name="Kusano J."/>
            <person name="Kanehori K."/>
            <person name="Takahashi-Fujii A."/>
            <person name="Hara H."/>
            <person name="Tanase T.-O."/>
            <person name="Nomura Y."/>
            <person name="Togiya S."/>
            <person name="Komai F."/>
            <person name="Hara R."/>
            <person name="Takeuchi K."/>
            <person name="Arita M."/>
            <person name="Imose N."/>
            <person name="Musashino K."/>
            <person name="Yuuki H."/>
            <person name="Oshima A."/>
            <person name="Sasaki N."/>
            <person name="Aotsuka S."/>
            <person name="Yoshikawa Y."/>
            <person name="Matsunawa H."/>
            <person name="Ichihara T."/>
            <person name="Shiohata N."/>
            <person name="Sano S."/>
            <person name="Moriya S."/>
            <person name="Momiyama H."/>
            <person name="Satoh N."/>
            <person name="Takami S."/>
            <person name="Terashima Y."/>
            <person name="Suzuki O."/>
            <person name="Nakagawa S."/>
            <person name="Senoh A."/>
            <person name="Mizoguchi H."/>
            <person name="Goto Y."/>
            <person name="Shimizu F."/>
            <person name="Wakebe H."/>
            <person name="Hishigaki H."/>
            <person name="Watanabe T."/>
            <person name="Sugiyama A."/>
            <person name="Takemoto M."/>
            <person name="Kawakami B."/>
            <person name="Yamazaki M."/>
            <person name="Watanabe K."/>
            <person name="Kumagai A."/>
            <person name="Itakura S."/>
            <person name="Fukuzumi Y."/>
            <person name="Fujimori Y."/>
            <person name="Komiyama M."/>
            <person name="Tashiro H."/>
            <person name="Tanigami A."/>
            <person name="Fujiwara T."/>
            <person name="Ono T."/>
            <person name="Yamada K."/>
            <person name="Fujii Y."/>
            <person name="Ozaki K."/>
            <person name="Hirao M."/>
            <person name="Ohmori Y."/>
            <person name="Kawabata A."/>
            <person name="Hikiji T."/>
            <person name="Kobatake N."/>
            <person name="Inagaki H."/>
            <person name="Ikema Y."/>
            <person name="Okamoto S."/>
            <person name="Okitani R."/>
            <person name="Kawakami T."/>
            <person name="Noguchi S."/>
            <person name="Itoh T."/>
            <person name="Shigeta K."/>
            <person name="Senba T."/>
            <person name="Matsumura K."/>
            <person name="Nakajima Y."/>
            <person name="Mizuno T."/>
            <person name="Morinaga M."/>
            <person name="Sasaki M."/>
            <person name="Togashi T."/>
            <person name="Oyama M."/>
            <person name="Hata H."/>
            <person name="Watanabe M."/>
            <person name="Komatsu T."/>
            <person name="Mizushima-Sugano J."/>
            <person name="Satoh T."/>
            <person name="Shirai Y."/>
            <person name="Takahashi Y."/>
            <person name="Nakagawa K."/>
            <person name="Okumura K."/>
            <person name="Nagase T."/>
            <person name="Nomura N."/>
            <person name="Kikuchi H."/>
            <person name="Masuho Y."/>
            <person name="Yamashita R."/>
            <person name="Nakai K."/>
            <person name="Yada T."/>
            <person name="Nakamura Y."/>
            <person name="Ohara O."/>
            <person name="Isogai T."/>
            <person name="Sugano S."/>
        </authorList>
    </citation>
    <scope>NUCLEOTIDE SEQUENCE [LARGE SCALE MRNA] (ISOFORM 2)</scope>
</reference>
<reference key="5">
    <citation type="submission" date="2004-06" db="EMBL/GenBank/DDBJ databases">
        <title>Cloning of human full open reading frames in Gateway(TM) system entry vector (pDONR201).</title>
        <authorList>
            <person name="Ebert L."/>
            <person name="Schick M."/>
            <person name="Neubert P."/>
            <person name="Schatten R."/>
            <person name="Henze S."/>
            <person name="Korn B."/>
        </authorList>
    </citation>
    <scope>NUCLEOTIDE SEQUENCE [LARGE SCALE MRNA] (ISOFORM 1)</scope>
</reference>
<reference key="6">
    <citation type="submission" date="2005-04" db="EMBL/GenBank/DDBJ databases">
        <authorList>
            <person name="Suzuki Y."/>
            <person name="Sugano S."/>
            <person name="Totoki Y."/>
            <person name="Toyoda A."/>
            <person name="Takeda T."/>
            <person name="Sakaki Y."/>
            <person name="Tanaka A."/>
            <person name="Yokoyama S."/>
        </authorList>
    </citation>
    <scope>NUCLEOTIDE SEQUENCE [LARGE SCALE MRNA] (ISOFORM 1)</scope>
    <source>
        <tissue>Adipose tissue</tissue>
    </source>
</reference>
<reference key="7">
    <citation type="journal article" date="2005" name="Nature">
        <title>Generation and annotation of the DNA sequences of human chromosomes 2 and 4.</title>
        <authorList>
            <person name="Hillier L.W."/>
            <person name="Graves T.A."/>
            <person name="Fulton R.S."/>
            <person name="Fulton L.A."/>
            <person name="Pepin K.H."/>
            <person name="Minx P."/>
            <person name="Wagner-McPherson C."/>
            <person name="Layman D."/>
            <person name="Wylie K."/>
            <person name="Sekhon M."/>
            <person name="Becker M.C."/>
            <person name="Fewell G.A."/>
            <person name="Delehaunty K.D."/>
            <person name="Miner T.L."/>
            <person name="Nash W.E."/>
            <person name="Kremitzki C."/>
            <person name="Oddy L."/>
            <person name="Du H."/>
            <person name="Sun H."/>
            <person name="Bradshaw-Cordum H."/>
            <person name="Ali J."/>
            <person name="Carter J."/>
            <person name="Cordes M."/>
            <person name="Harris A."/>
            <person name="Isak A."/>
            <person name="van Brunt A."/>
            <person name="Nguyen C."/>
            <person name="Du F."/>
            <person name="Courtney L."/>
            <person name="Kalicki J."/>
            <person name="Ozersky P."/>
            <person name="Abbott S."/>
            <person name="Armstrong J."/>
            <person name="Belter E.A."/>
            <person name="Caruso L."/>
            <person name="Cedroni M."/>
            <person name="Cotton M."/>
            <person name="Davidson T."/>
            <person name="Desai A."/>
            <person name="Elliott G."/>
            <person name="Erb T."/>
            <person name="Fronick C."/>
            <person name="Gaige T."/>
            <person name="Haakenson W."/>
            <person name="Haglund K."/>
            <person name="Holmes A."/>
            <person name="Harkins R."/>
            <person name="Kim K."/>
            <person name="Kruchowski S.S."/>
            <person name="Strong C.M."/>
            <person name="Grewal N."/>
            <person name="Goyea E."/>
            <person name="Hou S."/>
            <person name="Levy A."/>
            <person name="Martinka S."/>
            <person name="Mead K."/>
            <person name="McLellan M.D."/>
            <person name="Meyer R."/>
            <person name="Randall-Maher J."/>
            <person name="Tomlinson C."/>
            <person name="Dauphin-Kohlberg S."/>
            <person name="Kozlowicz-Reilly A."/>
            <person name="Shah N."/>
            <person name="Swearengen-Shahid S."/>
            <person name="Snider J."/>
            <person name="Strong J.T."/>
            <person name="Thompson J."/>
            <person name="Yoakum M."/>
            <person name="Leonard S."/>
            <person name="Pearman C."/>
            <person name="Trani L."/>
            <person name="Radionenko M."/>
            <person name="Waligorski J.E."/>
            <person name="Wang C."/>
            <person name="Rock S.M."/>
            <person name="Tin-Wollam A.-M."/>
            <person name="Maupin R."/>
            <person name="Latreille P."/>
            <person name="Wendl M.C."/>
            <person name="Yang S.-P."/>
            <person name="Pohl C."/>
            <person name="Wallis J.W."/>
            <person name="Spieth J."/>
            <person name="Bieri T.A."/>
            <person name="Berkowicz N."/>
            <person name="Nelson J.O."/>
            <person name="Osborne J."/>
            <person name="Ding L."/>
            <person name="Meyer R."/>
            <person name="Sabo A."/>
            <person name="Shotland Y."/>
            <person name="Sinha P."/>
            <person name="Wohldmann P.E."/>
            <person name="Cook L.L."/>
            <person name="Hickenbotham M.T."/>
            <person name="Eldred J."/>
            <person name="Williams D."/>
            <person name="Jones T.A."/>
            <person name="She X."/>
            <person name="Ciccarelli F.D."/>
            <person name="Izaurralde E."/>
            <person name="Taylor J."/>
            <person name="Schmutz J."/>
            <person name="Myers R.M."/>
            <person name="Cox D.R."/>
            <person name="Huang X."/>
            <person name="McPherson J.D."/>
            <person name="Mardis E.R."/>
            <person name="Clifton S.W."/>
            <person name="Warren W.C."/>
            <person name="Chinwalla A.T."/>
            <person name="Eddy S.R."/>
            <person name="Marra M.A."/>
            <person name="Ovcharenko I."/>
            <person name="Furey T.S."/>
            <person name="Miller W."/>
            <person name="Eichler E.E."/>
            <person name="Bork P."/>
            <person name="Suyama M."/>
            <person name="Torrents D."/>
            <person name="Waterston R.H."/>
            <person name="Wilson R.K."/>
        </authorList>
    </citation>
    <scope>NUCLEOTIDE SEQUENCE [LARGE SCALE GENOMIC DNA]</scope>
</reference>
<reference key="8">
    <citation type="journal article" date="2004" name="Genome Res.">
        <title>The status, quality, and expansion of the NIH full-length cDNA project: the Mammalian Gene Collection (MGC).</title>
        <authorList>
            <consortium name="The MGC Project Team"/>
        </authorList>
    </citation>
    <scope>NUCLEOTIDE SEQUENCE [LARGE SCALE MRNA] (ISOFORM 1)</scope>
    <source>
        <tissue>Lymph</tissue>
        <tissue>Muscle</tissue>
        <tissue>Placenta</tissue>
        <tissue>Testis</tissue>
    </source>
</reference>
<reference key="9">
    <citation type="journal article" date="2003" name="Nat. Biotechnol.">
        <title>Exploring proteomes and analyzing protein processing by mass spectrometric identification of sorted N-terminal peptides.</title>
        <authorList>
            <person name="Gevaert K."/>
            <person name="Goethals M."/>
            <person name="Martens L."/>
            <person name="Van Damme J."/>
            <person name="Staes A."/>
            <person name="Thomas G.R."/>
            <person name="Vandekerckhove J."/>
        </authorList>
    </citation>
    <scope>PROTEIN SEQUENCE OF 1-11</scope>
    <source>
        <tissue>Platelet</tissue>
    </source>
</reference>
<reference key="10">
    <citation type="journal article" date="2001" name="Biochem. Biophys. Res. Commun.">
        <title>A new member of the sorting nexin family interacts with the C-terminus of P-selectin.</title>
        <authorList>
            <person name="Florian V."/>
            <person name="Schlueter T."/>
            <person name="Bohnensack R."/>
        </authorList>
    </citation>
    <scope>SUBCELLULAR LOCATION</scope>
    <scope>INTERACTION WITH P-SELECTIN</scope>
</reference>
<reference key="11">
    <citation type="journal article" date="2004" name="J. Biol. Chem.">
        <title>Sorting motifs in the intracellular domain of the low density lipoprotein receptor interact with a novel domain of sorting nexin-17.</title>
        <authorList>
            <person name="Burden J.J."/>
            <person name="Sun X.-M."/>
            <person name="Garcia Garcia A.B."/>
            <person name="Soutar A.K."/>
        </authorList>
    </citation>
    <scope>INTERACTION WITH LDLR</scope>
    <scope>MUTAGENESIS OF LYS-62</scope>
    <scope>SUBCELLULAR LOCATION</scope>
</reference>
<reference key="12">
    <citation type="journal article" date="2004" name="Mol. Biol. Cell">
        <title>Sorting nexin 17 accelerates internalization yet retards degradation of P-selectin.</title>
        <authorList>
            <person name="Williams R."/>
            <person name="Schlueter T."/>
            <person name="Roberts M.S."/>
            <person name="Knauth P."/>
            <person name="Bohnensack R."/>
            <person name="Cutler D.F."/>
        </authorList>
    </citation>
    <scope>SUBCELLULAR LOCATION</scope>
    <scope>FUNCTION</scope>
</reference>
<reference key="13">
    <citation type="journal article" date="2005" name="J. Mol. Biol.">
        <title>Functions of sorting nexin 17 domains and recognition motif for P-selectin trafficking.</title>
        <authorList>
            <person name="Knauth P."/>
            <person name="Schlueter T."/>
            <person name="Czubayko M."/>
            <person name="Kirsch C."/>
            <person name="Florian V."/>
            <person name="Schreckenberger S."/>
            <person name="Hahn H."/>
            <person name="Bohnensack R."/>
        </authorList>
    </citation>
    <scope>SUBCELLULAR LOCATION</scope>
    <scope>INTERACTION WITH P-SELECTIN; LRP1 AND PTC</scope>
    <scope>FUNCTION</scope>
</reference>
<reference key="14">
    <citation type="journal article" date="2006" name="Biochem. Biophys. Res. Commun.">
        <title>Sorting nexin 17, a non-self-assembling and a PtdIns(3)P high class affinity protein, interacts with the cerebral cavernous malformation related protein KRIT1.</title>
        <authorList>
            <person name="Czubayko M."/>
            <person name="Knauth P."/>
            <person name="Schluter T."/>
            <person name="Florian V."/>
            <person name="Bohnensack R."/>
        </authorList>
    </citation>
    <scope>FUNCTION</scope>
    <scope>SUBCELLULAR LOCATION</scope>
    <scope>INTERACTION WITH KRIT1</scope>
</reference>
<reference key="15">
    <citation type="journal article" date="2008" name="Proc. Natl. Acad. Sci. U.S.A.">
        <title>A quantitative atlas of mitotic phosphorylation.</title>
        <authorList>
            <person name="Dephoure N."/>
            <person name="Zhou C."/>
            <person name="Villen J."/>
            <person name="Beausoleil S.A."/>
            <person name="Bakalarski C.E."/>
            <person name="Elledge S.J."/>
            <person name="Gygi S.P."/>
        </authorList>
    </citation>
    <scope>PHOSPHORYLATION [LARGE SCALE ANALYSIS] AT SER-415; SER-421; SER-437 AND SER-440</scope>
    <scope>IDENTIFICATION BY MASS SPECTROMETRY [LARGE SCALE ANALYSIS]</scope>
    <source>
        <tissue>Cervix carcinoma</tissue>
    </source>
</reference>
<reference key="16">
    <citation type="journal article" date="2009" name="Mol. Biol. Cell">
        <title>Polarized traffic of LRP1 involves AP1B and SNX17 operating on Y-dependent sorting motifs in different pathways.</title>
        <authorList>
            <person name="Donoso M."/>
            <person name="Cancino J."/>
            <person name="Lee J."/>
            <person name="van Kerkhof P."/>
            <person name="Retamal C."/>
            <person name="Bu G."/>
            <person name="Gonzalez A."/>
            <person name="Caceres A."/>
            <person name="Marzolo M.P."/>
        </authorList>
    </citation>
    <scope>FUNCTION</scope>
    <scope>INTERACTION WITH LRP1</scope>
</reference>
<reference key="17">
    <citation type="journal article" date="2009" name="Sci. Signal.">
        <title>Quantitative phosphoproteomic analysis of T cell receptor signaling reveals system-wide modulation of protein-protein interactions.</title>
        <authorList>
            <person name="Mayya V."/>
            <person name="Lundgren D.H."/>
            <person name="Hwang S.-I."/>
            <person name="Rezaul K."/>
            <person name="Wu L."/>
            <person name="Eng J.K."/>
            <person name="Rodionov V."/>
            <person name="Han D.K."/>
        </authorList>
    </citation>
    <scope>PHOSPHORYLATION [LARGE SCALE ANALYSIS] AT SER-407; SER-415 AND SER-421</scope>
    <scope>IDENTIFICATION BY MASS SPECTROMETRY [LARGE SCALE ANALYSIS]</scope>
    <source>
        <tissue>Leukemic T-cell</tissue>
    </source>
</reference>
<reference key="18">
    <citation type="journal article" date="2010" name="Sci. Signal.">
        <title>Quantitative phosphoproteomics reveals widespread full phosphorylation site occupancy during mitosis.</title>
        <authorList>
            <person name="Olsen J.V."/>
            <person name="Vermeulen M."/>
            <person name="Santamaria A."/>
            <person name="Kumar C."/>
            <person name="Miller M.L."/>
            <person name="Jensen L.J."/>
            <person name="Gnad F."/>
            <person name="Cox J."/>
            <person name="Jensen T.S."/>
            <person name="Nigg E.A."/>
            <person name="Brunak S."/>
            <person name="Mann M."/>
        </authorList>
    </citation>
    <scope>IDENTIFICATION BY MASS SPECTROMETRY [LARGE SCALE ANALYSIS]</scope>
    <source>
        <tissue>Cervix carcinoma</tissue>
    </source>
</reference>
<reference key="19">
    <citation type="journal article" date="2011" name="BMC Syst. Biol.">
        <title>Initial characterization of the human central proteome.</title>
        <authorList>
            <person name="Burkard T.R."/>
            <person name="Planyavsky M."/>
            <person name="Kaupe I."/>
            <person name="Breitwieser F.P."/>
            <person name="Buerckstuemmer T."/>
            <person name="Bennett K.L."/>
            <person name="Superti-Furga G."/>
            <person name="Colinge J."/>
        </authorList>
    </citation>
    <scope>IDENTIFICATION BY MASS SPECTROMETRY [LARGE SCALE ANALYSIS]</scope>
</reference>
<reference key="20">
    <citation type="journal article" date="2011" name="Sci. Signal.">
        <title>System-wide temporal characterization of the proteome and phosphoproteome of human embryonic stem cell differentiation.</title>
        <authorList>
            <person name="Rigbolt K.T."/>
            <person name="Prokhorova T.A."/>
            <person name="Akimov V."/>
            <person name="Henningsen J."/>
            <person name="Johansen P.T."/>
            <person name="Kratchmarova I."/>
            <person name="Kassem M."/>
            <person name="Mann M."/>
            <person name="Olsen J.V."/>
            <person name="Blagoev B."/>
        </authorList>
    </citation>
    <scope>PHOSPHORYLATION [LARGE SCALE ANALYSIS] AT SER-437 AND SER-440</scope>
    <scope>IDENTIFICATION BY MASS SPECTROMETRY [LARGE SCALE ANALYSIS]</scope>
</reference>
<reference key="21">
    <citation type="journal article" date="2012" name="J. Cell Biol.">
        <title>SNX17 protects integrins from degradation by sorting between lysosomal and recycling pathways.</title>
        <authorList>
            <person name="Steinberg F."/>
            <person name="Heesom K.J."/>
            <person name="Bass M.D."/>
            <person name="Cullen P.J."/>
        </authorList>
    </citation>
    <scope>FUNCTION</scope>
    <scope>INTERACTION WITH ITGB1 AND ITGB5</scope>
</reference>
<reference key="22">
    <citation type="journal article" date="2013" name="J. Proteome Res.">
        <title>Toward a comprehensive characterization of a human cancer cell phosphoproteome.</title>
        <authorList>
            <person name="Zhou H."/>
            <person name="Di Palma S."/>
            <person name="Preisinger C."/>
            <person name="Peng M."/>
            <person name="Polat A.N."/>
            <person name="Heck A.J."/>
            <person name="Mohammed S."/>
        </authorList>
    </citation>
    <scope>PHOSPHORYLATION [LARGE SCALE ANALYSIS] AT SER-336; SER-409; SER-415; SER-437 AND SER-440</scope>
    <scope>IDENTIFICATION BY MASS SPECTROMETRY [LARGE SCALE ANALYSIS]</scope>
    <source>
        <tissue>Cervix carcinoma</tissue>
        <tissue>Erythroleukemia</tissue>
    </source>
</reference>
<reference key="23">
    <citation type="journal article" date="2014" name="J. Proteomics">
        <title>An enzyme assisted RP-RPLC approach for in-depth analysis of human liver phosphoproteome.</title>
        <authorList>
            <person name="Bian Y."/>
            <person name="Song C."/>
            <person name="Cheng K."/>
            <person name="Dong M."/>
            <person name="Wang F."/>
            <person name="Huang J."/>
            <person name="Sun D."/>
            <person name="Wang L."/>
            <person name="Ye M."/>
            <person name="Zou H."/>
        </authorList>
    </citation>
    <scope>PHOSPHORYLATION [LARGE SCALE ANALYSIS] AT SER-409</scope>
    <scope>IDENTIFICATION BY MASS SPECTROMETRY [LARGE SCALE ANALYSIS]</scope>
    <source>
        <tissue>Liver</tissue>
    </source>
</reference>
<reference key="24">
    <citation type="journal article" date="2017" name="Nat. Cell Biol.">
        <title>Retriever is a multiprotein complex for retromer-independent endosomal cargo recycling.</title>
        <authorList>
            <person name="McNally K.E."/>
            <person name="Faulkner R."/>
            <person name="Steinberg F."/>
            <person name="Gallon M."/>
            <person name="Ghai R."/>
            <person name="Pim D."/>
            <person name="Langton P."/>
            <person name="Pearson N."/>
            <person name="Danson C.M."/>
            <person name="Naegele H."/>
            <person name="Morris L.L."/>
            <person name="Singla A."/>
            <person name="Overlee B.L."/>
            <person name="Heesom K.J."/>
            <person name="Sessions R."/>
            <person name="Banks L."/>
            <person name="Collins B.M."/>
            <person name="Berger I."/>
            <person name="Billadeau D.D."/>
            <person name="Burstein E."/>
            <person name="Cullen P.J."/>
        </authorList>
    </citation>
    <scope>FUNCTION</scope>
    <scope>INTERACTION WITH CCDC22; CCDC93; VPS26C AND VPS35L</scope>
    <scope>MUTAGENESIS OF LEU-432; SER-433; SER-440; GLY-464; 467-ASP--LEU-470; ASP-469 AND LEU-470</scope>
    <scope>SUBCELLULAR LOCATION</scope>
</reference>
<reference key="25">
    <citation type="journal article" date="2021" name="Sci. Signal.">
        <title>Cytoplasmic short linear motifs in ACE2 and integrin beta3 link SARS-CoV-2 host cell receptors to mediators of endocytosis and autophagy.</title>
        <authorList>
            <person name="Kliche J."/>
            <person name="Kuss H."/>
            <person name="Ali M."/>
            <person name="Ivarsson Y."/>
        </authorList>
    </citation>
    <scope>DOMAIN</scope>
</reference>
<reference key="26">
    <citation type="submission" date="2009-01" db="PDB data bank">
        <title>Crystal structure of the PX domain of sorting nexin-17 (SNX17).</title>
        <authorList>
            <consortium name="Structural genomics consortium (SGC)"/>
        </authorList>
    </citation>
    <scope>X-RAY CRYSTALLOGRAPHY (2.8 ANGSTROMS) OF 1-108</scope>
</reference>
<reference key="27">
    <citation type="journal article" date="2011" name="Proc. Natl. Acad. Sci. U.S.A.">
        <title>Phox homology band 4.1/ezrin/radixin/moesin-like proteins function as molecular scaffolds that interact with cargo receptors and Ras GTPases.</title>
        <authorList>
            <person name="Ghai R."/>
            <person name="Mobli M."/>
            <person name="Norwood S.J."/>
            <person name="Bugarcic A."/>
            <person name="Teasdale R.D."/>
            <person name="King G.F."/>
            <person name="Collins B.M."/>
        </authorList>
    </citation>
    <scope>X-RAY CRYSTALLOGRAPHY (1.8 ANGSTROMS) OF 1-112</scope>
    <scope>FUNCTION</scope>
    <scope>SUBCELLULAR LOCATION</scope>
    <scope>DOMAIN FERM-LIKE REGION</scope>
    <scope>SUBUNIT</scope>
    <scope>INTERACTION WITH HRAS</scope>
</reference>
<reference evidence="19" key="28">
    <citation type="journal article" date="2024" name="Nat. Commun.">
        <title>Structural basis for Retriever-SNX17 assembly and endosomal sorting.</title>
        <authorList>
            <person name="Singla A."/>
            <person name="Boesch D.J."/>
            <person name="Fung H.Y.J."/>
            <person name="Ngoka C."/>
            <person name="Enriquez A.S."/>
            <person name="Song R."/>
            <person name="Kramer D.A."/>
            <person name="Han Y."/>
            <person name="Banarer E."/>
            <person name="Lemoff A."/>
            <person name="Juneja P."/>
            <person name="Billadeau D.D."/>
            <person name="Bai X."/>
            <person name="Chen Z."/>
            <person name="Turer E.E."/>
            <person name="Burstein E."/>
            <person name="Chen B."/>
        </authorList>
    </citation>
    <scope>STRUCTURE BY ELECTRON MICROSCOPY (3.40 ANGSTROMS) OF 451-470 IN COMPLEX WITH THE RETRIEVER COMPLEX</scope>
    <scope>FUNCTION</scope>
    <scope>INTERACTION WITH THE RETRIEVER COMPLEX</scope>
    <scope>MUTAGENESIS OF LEU-470</scope>
</reference>
<dbReference type="EMBL" id="D31764">
    <property type="protein sequence ID" value="BAA06542.2"/>
    <property type="status" value="ALT_INIT"/>
    <property type="molecule type" value="mRNA"/>
</dbReference>
<dbReference type="EMBL" id="AJ404855">
    <property type="protein sequence ID" value="CAC12897.1"/>
    <property type="molecule type" value="Genomic_DNA"/>
</dbReference>
<dbReference type="EMBL" id="AJ404856">
    <property type="protein sequence ID" value="CAC12897.1"/>
    <property type="status" value="JOINED"/>
    <property type="molecule type" value="Genomic_DNA"/>
</dbReference>
<dbReference type="EMBL" id="BT007167">
    <property type="protein sequence ID" value="AAP35831.1"/>
    <property type="molecule type" value="mRNA"/>
</dbReference>
<dbReference type="EMBL" id="AK298869">
    <property type="protein sequence ID" value="BAG60989.1"/>
    <property type="molecule type" value="mRNA"/>
</dbReference>
<dbReference type="EMBL" id="CR457081">
    <property type="protein sequence ID" value="CAG33362.1"/>
    <property type="molecule type" value="mRNA"/>
</dbReference>
<dbReference type="EMBL" id="AK222543">
    <property type="protein sequence ID" value="BAD96263.1"/>
    <property type="molecule type" value="mRNA"/>
</dbReference>
<dbReference type="EMBL" id="AC074117">
    <property type="protein sequence ID" value="AAY14844.1"/>
    <property type="molecule type" value="Genomic_DNA"/>
</dbReference>
<dbReference type="EMBL" id="BC002524">
    <property type="protein sequence ID" value="AAH02524.1"/>
    <property type="molecule type" value="mRNA"/>
</dbReference>
<dbReference type="EMBL" id="BC002610">
    <property type="protein sequence ID" value="AAH02610.1"/>
    <property type="molecule type" value="mRNA"/>
</dbReference>
<dbReference type="EMBL" id="BC014620">
    <property type="protein sequence ID" value="AAH14620.1"/>
    <property type="molecule type" value="mRNA"/>
</dbReference>
<dbReference type="EMBL" id="BC050590">
    <property type="protein sequence ID" value="AAH50590.1"/>
    <property type="molecule type" value="mRNA"/>
</dbReference>
<dbReference type="CCDS" id="CCDS1750.1">
    <molecule id="Q15036-1"/>
</dbReference>
<dbReference type="CCDS" id="CCDS58704.1">
    <molecule id="Q15036-2"/>
</dbReference>
<dbReference type="RefSeq" id="NP_001253989.1">
    <molecule id="Q15036-2"/>
    <property type="nucleotide sequence ID" value="NM_001267060.2"/>
</dbReference>
<dbReference type="RefSeq" id="NP_055563.1">
    <molecule id="Q15036-1"/>
    <property type="nucleotide sequence ID" value="NM_014748.4"/>
</dbReference>
<dbReference type="PDB" id="3FOG">
    <property type="method" value="X-ray"/>
    <property type="resolution" value="2.80 A"/>
    <property type="chains" value="A=1-108"/>
</dbReference>
<dbReference type="PDB" id="3LUI">
    <property type="method" value="X-ray"/>
    <property type="resolution" value="1.80 A"/>
    <property type="chains" value="A/B/C=1-112"/>
</dbReference>
<dbReference type="PDB" id="4GXB">
    <property type="method" value="X-ray"/>
    <property type="resolution" value="1.80 A"/>
    <property type="chains" value="A=111-388"/>
</dbReference>
<dbReference type="PDB" id="4TKN">
    <property type="method" value="X-ray"/>
    <property type="resolution" value="3.00 A"/>
    <property type="chains" value="A/B/C=108-391"/>
</dbReference>
<dbReference type="PDB" id="7RM8">
    <property type="method" value="NMR"/>
    <property type="chains" value="A=457-470"/>
</dbReference>
<dbReference type="PDB" id="9AU7">
    <property type="method" value="EM"/>
    <property type="resolution" value="3.40 A"/>
    <property type="chains" value="D=451-470"/>
</dbReference>
<dbReference type="PDBsum" id="3FOG"/>
<dbReference type="PDBsum" id="3LUI"/>
<dbReference type="PDBsum" id="4GXB"/>
<dbReference type="PDBsum" id="4TKN"/>
<dbReference type="PDBsum" id="7RM8"/>
<dbReference type="PDBsum" id="9AU7"/>
<dbReference type="BMRB" id="Q15036"/>
<dbReference type="EMDB" id="EMD-43872"/>
<dbReference type="SMR" id="Q15036"/>
<dbReference type="BioGRID" id="115128">
    <property type="interactions" value="88"/>
</dbReference>
<dbReference type="DIP" id="DIP-52265N"/>
<dbReference type="FunCoup" id="Q15036">
    <property type="interactions" value="2469"/>
</dbReference>
<dbReference type="IntAct" id="Q15036">
    <property type="interactions" value="59"/>
</dbReference>
<dbReference type="MINT" id="Q15036"/>
<dbReference type="STRING" id="9606.ENSP00000233575"/>
<dbReference type="TCDB" id="3.A.34.1.1">
    <property type="family name" value="the sorting nexins of the escrt complexes (sn-escrt)"/>
</dbReference>
<dbReference type="TCDB" id="9.A.3.1.2">
    <property type="family name" value="the sorting nexin27 (snx27)-retromer assembly apparatus (retromeraa) family"/>
</dbReference>
<dbReference type="GlyGen" id="Q15036">
    <property type="glycosylation" value="3 sites, 1 O-linked glycan (3 sites)"/>
</dbReference>
<dbReference type="iPTMnet" id="Q15036"/>
<dbReference type="PhosphoSitePlus" id="Q15036"/>
<dbReference type="BioMuta" id="SNX17"/>
<dbReference type="DMDM" id="3123050"/>
<dbReference type="jPOST" id="Q15036"/>
<dbReference type="MassIVE" id="Q15036"/>
<dbReference type="PaxDb" id="9606-ENSP00000233575"/>
<dbReference type="PeptideAtlas" id="Q15036"/>
<dbReference type="ProteomicsDB" id="4890"/>
<dbReference type="ProteomicsDB" id="60385">
    <molecule id="Q15036-1"/>
</dbReference>
<dbReference type="Pumba" id="Q15036"/>
<dbReference type="Antibodypedia" id="28444">
    <property type="antibodies" value="165 antibodies from 26 providers"/>
</dbReference>
<dbReference type="DNASU" id="9784"/>
<dbReference type="Ensembl" id="ENST00000233575.7">
    <molecule id="Q15036-1"/>
    <property type="protein sequence ID" value="ENSP00000233575.2"/>
    <property type="gene ID" value="ENSG00000115234.11"/>
</dbReference>
<dbReference type="Ensembl" id="ENST00000537606.5">
    <molecule id="Q15036-2"/>
    <property type="protein sequence ID" value="ENSP00000439208.1"/>
    <property type="gene ID" value="ENSG00000115234.11"/>
</dbReference>
<dbReference type="GeneID" id="9784"/>
<dbReference type="KEGG" id="hsa:9784"/>
<dbReference type="MANE-Select" id="ENST00000233575.7">
    <property type="protein sequence ID" value="ENSP00000233575.2"/>
    <property type="RefSeq nucleotide sequence ID" value="NM_014748.4"/>
    <property type="RefSeq protein sequence ID" value="NP_055563.1"/>
</dbReference>
<dbReference type="UCSC" id="uc002rkg.3">
    <molecule id="Q15036-1"/>
    <property type="organism name" value="human"/>
</dbReference>
<dbReference type="AGR" id="HGNC:14979"/>
<dbReference type="CTD" id="9784"/>
<dbReference type="DisGeNET" id="9784"/>
<dbReference type="GeneCards" id="SNX17"/>
<dbReference type="HGNC" id="HGNC:14979">
    <property type="gene designation" value="SNX17"/>
</dbReference>
<dbReference type="HPA" id="ENSG00000115234">
    <property type="expression patterns" value="Low tissue specificity"/>
</dbReference>
<dbReference type="MIM" id="605963">
    <property type="type" value="gene"/>
</dbReference>
<dbReference type="neXtProt" id="NX_Q15036"/>
<dbReference type="OpenTargets" id="ENSG00000115234"/>
<dbReference type="PharmGKB" id="PA37954"/>
<dbReference type="VEuPathDB" id="HostDB:ENSG00000115234"/>
<dbReference type="eggNOG" id="KOG3784">
    <property type="taxonomic scope" value="Eukaryota"/>
</dbReference>
<dbReference type="GeneTree" id="ENSGT00950000183212"/>
<dbReference type="HOGENOM" id="CLU_041342_1_0_1"/>
<dbReference type="InParanoid" id="Q15036"/>
<dbReference type="OMA" id="RRHCVGV"/>
<dbReference type="OrthoDB" id="5772781at2759"/>
<dbReference type="PAN-GO" id="Q15036">
    <property type="GO annotations" value="3 GO annotations based on evolutionary models"/>
</dbReference>
<dbReference type="PhylomeDB" id="Q15036"/>
<dbReference type="TreeFam" id="TF318398"/>
<dbReference type="PathwayCommons" id="Q15036"/>
<dbReference type="SignaLink" id="Q15036"/>
<dbReference type="BioGRID-ORCS" id="9784">
    <property type="hits" value="34 hits in 1152 CRISPR screens"/>
</dbReference>
<dbReference type="ChiTaRS" id="SNX17">
    <property type="organism name" value="human"/>
</dbReference>
<dbReference type="EvolutionaryTrace" id="Q15036"/>
<dbReference type="GeneWiki" id="SNX17"/>
<dbReference type="GenomeRNAi" id="9784"/>
<dbReference type="Pharos" id="Q15036">
    <property type="development level" value="Tbio"/>
</dbReference>
<dbReference type="PRO" id="PR:Q15036"/>
<dbReference type="Proteomes" id="UP000005640">
    <property type="component" value="Chromosome 2"/>
</dbReference>
<dbReference type="RNAct" id="Q15036">
    <property type="molecule type" value="protein"/>
</dbReference>
<dbReference type="Bgee" id="ENSG00000115234">
    <property type="expression patterns" value="Expressed in granulocyte and 200 other cell types or tissues"/>
</dbReference>
<dbReference type="ExpressionAtlas" id="Q15036">
    <property type="expression patterns" value="baseline and differential"/>
</dbReference>
<dbReference type="GO" id="GO:0031410">
    <property type="term" value="C:cytoplasmic vesicle"/>
    <property type="evidence" value="ECO:0000314"/>
    <property type="project" value="UniProtKB"/>
</dbReference>
<dbReference type="GO" id="GO:0005829">
    <property type="term" value="C:cytosol"/>
    <property type="evidence" value="ECO:0000314"/>
    <property type="project" value="HPA"/>
</dbReference>
<dbReference type="GO" id="GO:0005769">
    <property type="term" value="C:early endosome"/>
    <property type="evidence" value="ECO:0000314"/>
    <property type="project" value="UniProtKB"/>
</dbReference>
<dbReference type="GO" id="GO:0005768">
    <property type="term" value="C:endosome"/>
    <property type="evidence" value="ECO:0000314"/>
    <property type="project" value="UniProtKB"/>
</dbReference>
<dbReference type="GO" id="GO:0010008">
    <property type="term" value="C:endosome membrane"/>
    <property type="evidence" value="ECO:0000314"/>
    <property type="project" value="MGI"/>
</dbReference>
<dbReference type="GO" id="GO:0005794">
    <property type="term" value="C:Golgi apparatus"/>
    <property type="evidence" value="ECO:0000314"/>
    <property type="project" value="UniProtKB"/>
</dbReference>
<dbReference type="GO" id="GO:0043231">
    <property type="term" value="C:intracellular membrane-bounded organelle"/>
    <property type="evidence" value="ECO:0000314"/>
    <property type="project" value="HPA"/>
</dbReference>
<dbReference type="GO" id="GO:0016020">
    <property type="term" value="C:membrane"/>
    <property type="evidence" value="ECO:0000303"/>
    <property type="project" value="UniProtKB"/>
</dbReference>
<dbReference type="GO" id="GO:0032991">
    <property type="term" value="C:protein-containing complex"/>
    <property type="evidence" value="ECO:0000314"/>
    <property type="project" value="MGI"/>
</dbReference>
<dbReference type="GO" id="GO:0050750">
    <property type="term" value="F:low-density lipoprotein particle receptor binding"/>
    <property type="evidence" value="ECO:0000314"/>
    <property type="project" value="UniProtKB"/>
</dbReference>
<dbReference type="GO" id="GO:0035091">
    <property type="term" value="F:phosphatidylinositol binding"/>
    <property type="evidence" value="ECO:0000314"/>
    <property type="project" value="UniProtKB"/>
</dbReference>
<dbReference type="GO" id="GO:0005102">
    <property type="term" value="F:signaling receptor binding"/>
    <property type="evidence" value="ECO:0000303"/>
    <property type="project" value="UniProtKB"/>
</dbReference>
<dbReference type="GO" id="GO:0035904">
    <property type="term" value="P:aorta development"/>
    <property type="evidence" value="ECO:0007669"/>
    <property type="project" value="Ensembl"/>
</dbReference>
<dbReference type="GO" id="GO:0003279">
    <property type="term" value="P:cardiac septum development"/>
    <property type="evidence" value="ECO:0007669"/>
    <property type="project" value="Ensembl"/>
</dbReference>
<dbReference type="GO" id="GO:0006707">
    <property type="term" value="P:cholesterol catabolic process"/>
    <property type="evidence" value="ECO:0000305"/>
    <property type="project" value="UniProtKB"/>
</dbReference>
<dbReference type="GO" id="GO:0060976">
    <property type="term" value="P:coronary vasculature development"/>
    <property type="evidence" value="ECO:0007669"/>
    <property type="project" value="Ensembl"/>
</dbReference>
<dbReference type="GO" id="GO:0032456">
    <property type="term" value="P:endocytic recycling"/>
    <property type="evidence" value="ECO:0000315"/>
    <property type="project" value="UniProtKB"/>
</dbReference>
<dbReference type="GO" id="GO:0016197">
    <property type="term" value="P:endosomal transport"/>
    <property type="evidence" value="ECO:0000303"/>
    <property type="project" value="UniProtKB"/>
</dbReference>
<dbReference type="GO" id="GO:0006886">
    <property type="term" value="P:intracellular protein transport"/>
    <property type="evidence" value="ECO:0000318"/>
    <property type="project" value="GO_Central"/>
</dbReference>
<dbReference type="GO" id="GO:0001822">
    <property type="term" value="P:kidney development"/>
    <property type="evidence" value="ECO:0007669"/>
    <property type="project" value="Ensembl"/>
</dbReference>
<dbReference type="GO" id="GO:0006898">
    <property type="term" value="P:receptor-mediated endocytosis"/>
    <property type="evidence" value="ECO:0007669"/>
    <property type="project" value="Ensembl"/>
</dbReference>
<dbReference type="GO" id="GO:0030100">
    <property type="term" value="P:regulation of endocytosis"/>
    <property type="evidence" value="ECO:0000303"/>
    <property type="project" value="UniProtKB"/>
</dbReference>
<dbReference type="GO" id="GO:0007165">
    <property type="term" value="P:signal transduction"/>
    <property type="evidence" value="ECO:0007669"/>
    <property type="project" value="InterPro"/>
</dbReference>
<dbReference type="CDD" id="cd13337">
    <property type="entry name" value="FERM-like_C_SNX17"/>
    <property type="match status" value="1"/>
</dbReference>
<dbReference type="CDD" id="cd16121">
    <property type="entry name" value="FERM_F1_SNX17"/>
    <property type="match status" value="1"/>
</dbReference>
<dbReference type="CDD" id="cd06885">
    <property type="entry name" value="PX_SNX17_31"/>
    <property type="match status" value="1"/>
</dbReference>
<dbReference type="FunFam" id="1.20.80.60:FF:000001">
    <property type="entry name" value="Sorting nexin-17 isoform1"/>
    <property type="match status" value="1"/>
</dbReference>
<dbReference type="FunFam" id="2.30.29.30:FF:000145">
    <property type="entry name" value="Sorting nexin-17 isoform1"/>
    <property type="match status" value="1"/>
</dbReference>
<dbReference type="FunFam" id="3.10.20.90:FF:000094">
    <property type="entry name" value="Sorting nexin-17 isoform1"/>
    <property type="match status" value="1"/>
</dbReference>
<dbReference type="FunFam" id="3.30.1520.10:FF:000008">
    <property type="entry name" value="Sorting nexin-17 isoform1"/>
    <property type="match status" value="1"/>
</dbReference>
<dbReference type="Gene3D" id="1.20.80.60">
    <property type="match status" value="1"/>
</dbReference>
<dbReference type="Gene3D" id="3.10.20.90">
    <property type="entry name" value="Phosphatidylinositol 3-kinase Catalytic Subunit, Chain A, domain 1"/>
    <property type="match status" value="1"/>
</dbReference>
<dbReference type="Gene3D" id="3.30.1520.10">
    <property type="entry name" value="Phox-like domain"/>
    <property type="match status" value="1"/>
</dbReference>
<dbReference type="Gene3D" id="2.30.29.30">
    <property type="entry name" value="Pleckstrin-homology domain (PH domain)/Phosphotyrosine-binding domain (PTB)"/>
    <property type="match status" value="1"/>
</dbReference>
<dbReference type="InterPro" id="IPR011993">
    <property type="entry name" value="PH-like_dom_sf"/>
</dbReference>
<dbReference type="InterPro" id="IPR001683">
    <property type="entry name" value="PX_dom"/>
</dbReference>
<dbReference type="InterPro" id="IPR036871">
    <property type="entry name" value="PX_dom_sf"/>
</dbReference>
<dbReference type="InterPro" id="IPR000159">
    <property type="entry name" value="RA_dom"/>
</dbReference>
<dbReference type="InterPro" id="IPR048763">
    <property type="entry name" value="SNX17-31_FERM_F1"/>
</dbReference>
<dbReference type="InterPro" id="IPR048767">
    <property type="entry name" value="SNX17-31_FERM_F2"/>
</dbReference>
<dbReference type="InterPro" id="IPR040842">
    <property type="entry name" value="SNX17/31_FERM"/>
</dbReference>
<dbReference type="InterPro" id="IPR037836">
    <property type="entry name" value="SNX17_FERM-like_dom"/>
</dbReference>
<dbReference type="InterPro" id="IPR028666">
    <property type="entry name" value="SNX17_FERM_N"/>
</dbReference>
<dbReference type="PANTHER" id="PTHR12431">
    <property type="entry name" value="SORTING NEXIN 17 AND 27"/>
    <property type="match status" value="1"/>
</dbReference>
<dbReference type="PANTHER" id="PTHR12431:SF16">
    <property type="entry name" value="SORTING NEXIN-17"/>
    <property type="match status" value="1"/>
</dbReference>
<dbReference type="Pfam" id="PF00787">
    <property type="entry name" value="PX"/>
    <property type="match status" value="1"/>
</dbReference>
<dbReference type="Pfam" id="PF21273">
    <property type="entry name" value="SNX17-27-31_F1_FERM"/>
    <property type="match status" value="1"/>
</dbReference>
<dbReference type="Pfam" id="PF21271">
    <property type="entry name" value="SNX17-31_F2_FERM"/>
    <property type="match status" value="1"/>
</dbReference>
<dbReference type="Pfam" id="PF18116">
    <property type="entry name" value="SNX17_FERM_C"/>
    <property type="match status" value="1"/>
</dbReference>
<dbReference type="SMART" id="SM00312">
    <property type="entry name" value="PX"/>
    <property type="match status" value="1"/>
</dbReference>
<dbReference type="SUPFAM" id="SSF64268">
    <property type="entry name" value="PX domain"/>
    <property type="match status" value="1"/>
</dbReference>
<dbReference type="PROSITE" id="PS50195">
    <property type="entry name" value="PX"/>
    <property type="match status" value="1"/>
</dbReference>
<dbReference type="PROSITE" id="PS50200">
    <property type="entry name" value="RA"/>
    <property type="match status" value="1"/>
</dbReference>
<keyword id="KW-0002">3D-structure</keyword>
<keyword id="KW-0025">Alternative splicing</keyword>
<keyword id="KW-0963">Cytoplasm</keyword>
<keyword id="KW-0968">Cytoplasmic vesicle</keyword>
<keyword id="KW-0903">Direct protein sequencing</keyword>
<keyword id="KW-0967">Endosome</keyword>
<keyword id="KW-0446">Lipid-binding</keyword>
<keyword id="KW-0472">Membrane</keyword>
<keyword id="KW-0597">Phosphoprotein</keyword>
<keyword id="KW-0653">Protein transport</keyword>
<keyword id="KW-1267">Proteomics identification</keyword>
<keyword id="KW-1185">Reference proteome</keyword>
<keyword id="KW-0813">Transport</keyword>
<proteinExistence type="evidence at protein level"/>
<sequence>MHFSIPETESRSGDSGGSAYVAYNIHVNGVLHCRVRYSQLLGLHEQLRKEYGANVLPAFPPKKLFSLTPAEVEQRREQLEKYMQAVRQDPLLGSSETFNSFLRRAQQETQQVPTEEVSLEVLLSNGQKVLVNVLTSDQTEDVLEAVAAKLDLPDDLIGYFSLFLVREKEDGAFSFVRKLQEFELPYVSVTSLRSQEYKIVLRKSYWDSAYDDDVMENRVGLNLLYAQTVSDIERGWILVTKEQHRQLKSLQEKVSKKEFLRLAQTLRHYGYLRFDACVADFPEKDCPVVVSAGNSELSLQLRLPGQQLREGSFRVTRMRCWRVTSSVPLPSGSTSSPGRGRGEVRLELAFEYLMSKDRLQWVTITSPQAIMMSICLQSMVDELMVKKSGGSIRKMLRRRVGGTLRRSDSQQAVKSPPLLESPDATRESMVKLSSKLSAVSLRGIGSPSTDASASDVHGNFAFEGIGDEDL</sequence>
<protein>
    <recommendedName>
        <fullName>Sorting nexin-17</fullName>
    </recommendedName>
</protein>
<organism>
    <name type="scientific">Homo sapiens</name>
    <name type="common">Human</name>
    <dbReference type="NCBI Taxonomy" id="9606"/>
    <lineage>
        <taxon>Eukaryota</taxon>
        <taxon>Metazoa</taxon>
        <taxon>Chordata</taxon>
        <taxon>Craniata</taxon>
        <taxon>Vertebrata</taxon>
        <taxon>Euteleostomi</taxon>
        <taxon>Mammalia</taxon>
        <taxon>Eutheria</taxon>
        <taxon>Euarchontoglires</taxon>
        <taxon>Primates</taxon>
        <taxon>Haplorrhini</taxon>
        <taxon>Catarrhini</taxon>
        <taxon>Hominidae</taxon>
        <taxon>Homo</taxon>
    </lineage>
</organism>
<evidence type="ECO:0000250" key="1"/>
<evidence type="ECO:0000250" key="2">
    <source>
        <dbReference type="UniProtKB" id="Q8BVL3"/>
    </source>
</evidence>
<evidence type="ECO:0000255" key="3">
    <source>
        <dbReference type="PROSITE-ProRule" id="PRU00147"/>
    </source>
</evidence>
<evidence type="ECO:0000255" key="4">
    <source>
        <dbReference type="PROSITE-ProRule" id="PRU00166"/>
    </source>
</evidence>
<evidence type="ECO:0000256" key="5">
    <source>
        <dbReference type="SAM" id="MobiDB-lite"/>
    </source>
</evidence>
<evidence type="ECO:0000269" key="6">
    <source>
    </source>
</evidence>
<evidence type="ECO:0000269" key="7">
    <source>
    </source>
</evidence>
<evidence type="ECO:0000269" key="8">
    <source>
    </source>
</evidence>
<evidence type="ECO:0000269" key="9">
    <source>
    </source>
</evidence>
<evidence type="ECO:0000269" key="10">
    <source>
    </source>
</evidence>
<evidence type="ECO:0000269" key="11">
    <source>
    </source>
</evidence>
<evidence type="ECO:0000269" key="12">
    <source>
    </source>
</evidence>
<evidence type="ECO:0000269" key="13">
    <source>
    </source>
</evidence>
<evidence type="ECO:0000269" key="14">
    <source>
    </source>
</evidence>
<evidence type="ECO:0000269" key="15">
    <source>
    </source>
</evidence>
<evidence type="ECO:0000269" key="16">
    <source>
    </source>
</evidence>
<evidence type="ECO:0000303" key="17">
    <source>
    </source>
</evidence>
<evidence type="ECO:0000305" key="18"/>
<evidence type="ECO:0007744" key="19">
    <source>
        <dbReference type="PDB" id="9AU7"/>
    </source>
</evidence>
<evidence type="ECO:0007744" key="20">
    <source>
    </source>
</evidence>
<evidence type="ECO:0007744" key="21">
    <source>
    </source>
</evidence>
<evidence type="ECO:0007744" key="22">
    <source>
    </source>
</evidence>
<evidence type="ECO:0007744" key="23">
    <source>
    </source>
</evidence>
<evidence type="ECO:0007744" key="24">
    <source>
    </source>
</evidence>
<evidence type="ECO:0007829" key="25">
    <source>
        <dbReference type="PDB" id="3FOG"/>
    </source>
</evidence>
<evidence type="ECO:0007829" key="26">
    <source>
        <dbReference type="PDB" id="3LUI"/>
    </source>
</evidence>
<evidence type="ECO:0007829" key="27">
    <source>
        <dbReference type="PDB" id="4GXB"/>
    </source>
</evidence>
<evidence type="ECO:0007829" key="28">
    <source>
        <dbReference type="PDB" id="4TKN"/>
    </source>
</evidence>
<evidence type="ECO:0007829" key="29">
    <source>
        <dbReference type="PDB" id="9AU7"/>
    </source>
</evidence>
<accession>Q15036</accession>
<accession>B4DQM7</accession>
<accession>Q53HN7</accession>
<accession>Q6IAS3</accession>
<feature type="chain" id="PRO_0000213865" description="Sorting nexin-17">
    <location>
        <begin position="1"/>
        <end position="470"/>
    </location>
</feature>
<feature type="domain" description="PX" evidence="3">
    <location>
        <begin position="1"/>
        <end position="109"/>
    </location>
</feature>
<feature type="domain" description="Ras-associating" evidence="4">
    <location>
        <begin position="115"/>
        <end position="206"/>
    </location>
</feature>
<feature type="region of interest" description="FERM-like" evidence="16">
    <location>
        <begin position="115"/>
        <end position="432"/>
    </location>
</feature>
<feature type="region of interest" description="PTB-like F3 module">
    <location>
        <begin position="270"/>
        <end position="432"/>
    </location>
</feature>
<feature type="region of interest" description="Disordered" evidence="5">
    <location>
        <begin position="401"/>
        <end position="426"/>
    </location>
</feature>
<feature type="region of interest" description="Interacts with the retriever complex" evidence="16">
    <location>
        <begin position="458"/>
        <end position="470"/>
    </location>
</feature>
<feature type="binding site" evidence="1">
    <location>
        <position position="36"/>
    </location>
    <ligand>
        <name>a 1,2-diacyl-sn-glycero-3-phospho-(1D-myo-inositol-3-phosphate)</name>
        <dbReference type="ChEBI" id="CHEBI:58088"/>
    </ligand>
</feature>
<feature type="binding site" evidence="1">
    <location>
        <position position="38"/>
    </location>
    <ligand>
        <name>a 1,2-diacyl-sn-glycero-3-phospho-(1D-myo-inositol-3-phosphate)</name>
        <dbReference type="ChEBI" id="CHEBI:58088"/>
    </ligand>
</feature>
<feature type="binding site" evidence="1">
    <location>
        <position position="62"/>
    </location>
    <ligand>
        <name>a 1,2-diacyl-sn-glycero-3-phospho-(1D-myo-inositol-3-phosphate)</name>
        <dbReference type="ChEBI" id="CHEBI:58088"/>
    </ligand>
</feature>
<feature type="binding site" evidence="1">
    <location>
        <position position="75"/>
    </location>
    <ligand>
        <name>a 1,2-diacyl-sn-glycero-3-phospho-(1D-myo-inositol-3-phosphate)</name>
        <dbReference type="ChEBI" id="CHEBI:58088"/>
    </ligand>
</feature>
<feature type="modified residue" description="Phosphoserine" evidence="23">
    <location>
        <position position="336"/>
    </location>
</feature>
<feature type="modified residue" description="Phosphoserine" evidence="21">
    <location>
        <position position="407"/>
    </location>
</feature>
<feature type="modified residue" description="Phosphoserine" evidence="23 24">
    <location>
        <position position="409"/>
    </location>
</feature>
<feature type="modified residue" description="Phosphoserine" evidence="20 21 23">
    <location>
        <position position="415"/>
    </location>
</feature>
<feature type="modified residue" description="Phosphoserine" evidence="20 21">
    <location>
        <position position="421"/>
    </location>
</feature>
<feature type="modified residue" description="Phosphoserine" evidence="20 22 23">
    <location>
        <position position="437"/>
    </location>
</feature>
<feature type="modified residue" description="Phosphoserine" evidence="20 22 23">
    <location>
        <position position="440"/>
    </location>
</feature>
<feature type="splice variant" id="VSP_044935" description="In isoform 2." evidence="17">
    <location>
        <begin position="22"/>
        <end position="46"/>
    </location>
</feature>
<feature type="mutagenesis site" description="No association with endosomes." evidence="7">
    <original>K</original>
    <variation>A</variation>
    <location>
        <position position="62"/>
    </location>
</feature>
<feature type="mutagenesis site" description="No effect on interaction with CCDC22, CCDC93, VPS26C and VPS35L." evidence="14">
    <original>L</original>
    <variation>A</variation>
    <location>
        <position position="432"/>
    </location>
</feature>
<feature type="mutagenesis site" description="No effect on interaction with CCDC22, CCDC93, VPS26C and VPS35L." evidence="14">
    <original>S</original>
    <variation>D</variation>
    <location>
        <position position="433"/>
    </location>
</feature>
<feature type="mutagenesis site" description="No effect on interaction with CCDC22, CCDC93, VPS26C and VPS35L." evidence="14">
    <original>S</original>
    <variation>D</variation>
    <location>
        <position position="440"/>
    </location>
</feature>
<feature type="mutagenesis site" description="Slightly decreases interaction with CCDC22, CCDC93, VPS26C and VPS35L." evidence="14">
    <original>G</original>
    <variation>V</variation>
    <location>
        <position position="464"/>
    </location>
</feature>
<feature type="mutagenesis site" description="Strongly decreases interaction with CCDC22, CCDC93, VPS26C and VPS35L. No effect on endosomal location." evidence="14">
    <location>
        <begin position="467"/>
        <end position="470"/>
    </location>
</feature>
<feature type="mutagenesis site" description="Slightly decreases interaction with CCDC22, CCDC93, VPS26C and VPS35L." evidence="14">
    <original>D</original>
    <variation>K</variation>
    <location>
        <position position="469"/>
    </location>
</feature>
<feature type="mutagenesis site" description="Strongly decreases interaction with CCDC22, CCDC93, VPS26C and VPS35L. No effect on endosomal location." evidence="14">
    <original>L</original>
    <variation>G</variation>
    <location>
        <position position="470"/>
    </location>
</feature>
<feature type="mutagenesis site" description="Abolishes interaction with the retriever complex." evidence="16">
    <location>
        <position position="470"/>
    </location>
</feature>
<feature type="sequence conflict" description="In Ref. 6; BAD96263." evidence="18" ref="6">
    <original>M</original>
    <variation>V</variation>
    <location>
        <position position="429"/>
    </location>
</feature>
<feature type="strand" evidence="26">
    <location>
        <begin position="3"/>
        <end position="11"/>
    </location>
</feature>
<feature type="strand" evidence="26">
    <location>
        <begin position="20"/>
        <end position="27"/>
    </location>
</feature>
<feature type="strand" evidence="26">
    <location>
        <begin position="30"/>
        <end position="36"/>
    </location>
</feature>
<feature type="helix" evidence="26">
    <location>
        <begin position="37"/>
        <end position="51"/>
    </location>
</feature>
<feature type="turn" evidence="25">
    <location>
        <begin position="53"/>
        <end position="55"/>
    </location>
</feature>
<feature type="helix" evidence="26">
    <location>
        <begin position="69"/>
        <end position="88"/>
    </location>
</feature>
<feature type="helix" evidence="26">
    <location>
        <begin position="90"/>
        <end position="94"/>
    </location>
</feature>
<feature type="helix" evidence="26">
    <location>
        <begin position="96"/>
        <end position="109"/>
    </location>
</feature>
<feature type="strand" evidence="27">
    <location>
        <begin position="116"/>
        <end position="123"/>
    </location>
</feature>
<feature type="strand" evidence="27">
    <location>
        <begin position="128"/>
        <end position="134"/>
    </location>
</feature>
<feature type="helix" evidence="27">
    <location>
        <begin position="139"/>
        <end position="150"/>
    </location>
</feature>
<feature type="helix" evidence="27">
    <location>
        <begin position="154"/>
        <end position="159"/>
    </location>
</feature>
<feature type="strand" evidence="27">
    <location>
        <begin position="160"/>
        <end position="167"/>
    </location>
</feature>
<feature type="strand" evidence="27">
    <location>
        <begin position="173"/>
        <end position="178"/>
    </location>
</feature>
<feature type="helix" evidence="27">
    <location>
        <begin position="185"/>
        <end position="190"/>
    </location>
</feature>
<feature type="turn" evidence="28">
    <location>
        <begin position="191"/>
        <end position="193"/>
    </location>
</feature>
<feature type="strand" evidence="27">
    <location>
        <begin position="197"/>
        <end position="203"/>
    </location>
</feature>
<feature type="helix" evidence="27">
    <location>
        <begin position="208"/>
        <end position="210"/>
    </location>
</feature>
<feature type="helix" evidence="27">
    <location>
        <begin position="211"/>
        <end position="214"/>
    </location>
</feature>
<feature type="helix" evidence="27">
    <location>
        <begin position="218"/>
        <end position="233"/>
    </location>
</feature>
<feature type="strand" evidence="27">
    <location>
        <begin position="236"/>
        <end position="238"/>
    </location>
</feature>
<feature type="helix" evidence="27">
    <location>
        <begin position="241"/>
        <end position="253"/>
    </location>
</feature>
<feature type="helix" evidence="27">
    <location>
        <begin position="256"/>
        <end position="263"/>
    </location>
</feature>
<feature type="turn" evidence="27">
    <location>
        <begin position="268"/>
        <end position="270"/>
    </location>
</feature>
<feature type="strand" evidence="27">
    <location>
        <begin position="277"/>
        <end position="283"/>
    </location>
</feature>
<feature type="strand" evidence="27">
    <location>
        <begin position="286"/>
        <end position="293"/>
    </location>
</feature>
<feature type="strand" evidence="27">
    <location>
        <begin position="296"/>
        <end position="300"/>
    </location>
</feature>
<feature type="strand" evidence="27">
    <location>
        <begin position="310"/>
        <end position="314"/>
    </location>
</feature>
<feature type="helix" evidence="27">
    <location>
        <begin position="315"/>
        <end position="317"/>
    </location>
</feature>
<feature type="strand" evidence="27">
    <location>
        <begin position="318"/>
        <end position="325"/>
    </location>
</feature>
<feature type="strand" evidence="27">
    <location>
        <begin position="346"/>
        <end position="355"/>
    </location>
</feature>
<feature type="strand" evidence="27">
    <location>
        <begin position="358"/>
        <end position="365"/>
    </location>
</feature>
<feature type="helix" evidence="27">
    <location>
        <begin position="369"/>
        <end position="387"/>
    </location>
</feature>
<feature type="strand" evidence="29">
    <location>
        <begin position="461"/>
        <end position="464"/>
    </location>
</feature>
<feature type="turn" evidence="29">
    <location>
        <begin position="467"/>
        <end position="469"/>
    </location>
</feature>
<gene>
    <name type="primary">SNX17</name>
    <name type="synonym">KIAA0064</name>
</gene>
<name>SNX17_HUMAN</name>